<keyword id="KW-0010">Activator</keyword>
<keyword id="KW-0025">Alternative splicing</keyword>
<keyword id="KW-0225">Disease variant</keyword>
<keyword id="KW-0238">DNA-binding</keyword>
<keyword id="KW-0991">Intellectual disability</keyword>
<keyword id="KW-0479">Metal-binding</keyword>
<keyword id="KW-0539">Nucleus</keyword>
<keyword id="KW-0597">Phosphoprotein</keyword>
<keyword id="KW-1267">Proteomics identification</keyword>
<keyword id="KW-1185">Reference proteome</keyword>
<keyword id="KW-0677">Repeat</keyword>
<keyword id="KW-0804">Transcription</keyword>
<keyword id="KW-0805">Transcription regulation</keyword>
<keyword id="KW-0862">Zinc</keyword>
<keyword id="KW-0863">Zinc-finger</keyword>
<feature type="chain" id="PRO_0000047258" description="Zinc finger X-chromosomal protein">
    <location>
        <begin position="1"/>
        <end position="805"/>
    </location>
</feature>
<feature type="zinc finger region" description="C2H2-type 1" evidence="2">
    <location>
        <begin position="425"/>
        <end position="447"/>
    </location>
</feature>
<feature type="zinc finger region" description="C2H2-type 2" evidence="2">
    <location>
        <begin position="456"/>
        <end position="478"/>
    </location>
</feature>
<feature type="zinc finger region" description="C2H2-type 3" evidence="2">
    <location>
        <begin position="488"/>
        <end position="510"/>
    </location>
</feature>
<feature type="zinc finger region" description="C2H2-type 4" evidence="2">
    <location>
        <begin position="519"/>
        <end position="542"/>
    </location>
</feature>
<feature type="zinc finger region" description="C2H2-type 5" evidence="2">
    <location>
        <begin position="548"/>
        <end position="570"/>
    </location>
</feature>
<feature type="zinc finger region" description="C2H2-type 6" evidence="2">
    <location>
        <begin position="576"/>
        <end position="599"/>
    </location>
</feature>
<feature type="zinc finger region" description="C2H2-type 7" evidence="2">
    <location>
        <begin position="605"/>
        <end position="627"/>
    </location>
</feature>
<feature type="zinc finger region" description="C2H2-type 8" evidence="2">
    <location>
        <begin position="633"/>
        <end position="656"/>
    </location>
</feature>
<feature type="zinc finger region" description="C2H2-type 9" evidence="2">
    <location>
        <begin position="662"/>
        <end position="684"/>
    </location>
</feature>
<feature type="zinc finger region" description="C2H2-type 10" evidence="2">
    <location>
        <begin position="690"/>
        <end position="713"/>
    </location>
</feature>
<feature type="zinc finger region" description="C2H2-type 11" evidence="2">
    <location>
        <begin position="719"/>
        <end position="741"/>
    </location>
</feature>
<feature type="zinc finger region" description="C2H2-type 12" evidence="2">
    <location>
        <begin position="747"/>
        <end position="770"/>
    </location>
</feature>
<feature type="zinc finger region" description="C2H2-type 13" evidence="2">
    <location>
        <begin position="776"/>
        <end position="798"/>
    </location>
</feature>
<feature type="modified residue" description="Phosphoserine" evidence="1">
    <location>
        <position position="274"/>
    </location>
</feature>
<feature type="splice variant" id="VSP_014371" description="In isoform 2." evidence="6">
    <location>
        <begin position="1"/>
        <end position="229"/>
    </location>
</feature>
<feature type="splice variant" id="VSP_054512" description="In isoform 3." evidence="5">
    <original>T</original>
    <variation>TDRVSFCHPGWSTVAPSGSTATSASQAQVICSASRVTGAT</variation>
    <location>
        <position position="19"/>
    </location>
</feature>
<feature type="sequence variant" id="VAR_089494" description="In MRXS37; likely pathogenic; changed DNA-binding transcription activator activity, RNA polymerase II-specific." evidence="4">
    <original>R</original>
    <variation>W</variation>
    <location>
        <position position="764"/>
    </location>
</feature>
<feature type="sequence variant" id="VAR_089495" description="In MRXS37; likely pathogenic; changed DNA-binding transcription activator activity, RNA polymerase II-specific." evidence="4">
    <original>T</original>
    <variation>M</variation>
    <location>
        <position position="771"/>
    </location>
</feature>
<feature type="sequence variant" id="VAR_089496" description="In MRXS37; likely pathogenic; changed DNA-binding transcription activator activity, RNA polymerase II-specific." evidence="4">
    <original>Y</original>
    <variation>C</variation>
    <location>
        <position position="774"/>
    </location>
</feature>
<feature type="sequence variant" id="VAR_089497" description="In MRXS37; uncertain significance; changed DNA-binding transcription activator activity, RNA polymerase II-specific." evidence="4">
    <original>R</original>
    <variation>Q</variation>
    <location>
        <position position="786"/>
    </location>
</feature>
<feature type="sequence conflict" description="In Ref. 1; CAA42416/CAA42417." evidence="7" ref="1">
    <original>AAAAA</original>
    <variation>GHAP</variation>
    <location>
        <begin position="337"/>
        <end position="341"/>
    </location>
</feature>
<feature type="sequence conflict" description="In Ref. 2; AAA61309." evidence="7" ref="2">
    <original>A</original>
    <variation>R</variation>
    <location>
        <position position="337"/>
    </location>
</feature>
<feature type="sequence conflict" description="In Ref. 7." evidence="7" ref="7">
    <original>R</original>
    <variation>S</variation>
    <location>
        <position position="558"/>
    </location>
</feature>
<feature type="sequence conflict" description="In Ref. 7." evidence="7" ref="7">
    <location>
        <position position="634"/>
    </location>
</feature>
<feature type="sequence conflict" description="In Ref. 7." evidence="7" ref="7">
    <original>A</original>
    <variation>R</variation>
    <location>
        <position position="683"/>
    </location>
</feature>
<feature type="sequence conflict" description="In Ref. 7." evidence="7" ref="7">
    <original>T</original>
    <variation>R</variation>
    <location>
        <position position="771"/>
    </location>
</feature>
<gene>
    <name type="primary">ZFX</name>
</gene>
<reference key="1">
    <citation type="journal article" date="1989" name="Nature">
        <title>Putative transcription activator with alternative isoforms encoded by human ZFX gene.</title>
        <authorList>
            <person name="Schneider-Gaedicke A."/>
            <person name="Beer-Romero P."/>
            <person name="Brown L.G."/>
            <person name="Mardon G."/>
            <person name="Luoh S.W."/>
            <person name="Page D.C."/>
        </authorList>
    </citation>
    <scope>NUCLEOTIDE SEQUENCE [MRNA] (ISOFORMS 1 AND 2)</scope>
</reference>
<reference key="2">
    <citation type="journal article" date="1990" name="Proc. Natl. Acad. Sci. U.S.A.">
        <title>Comparison of human ZFY and ZFX transcripts.</title>
        <authorList>
            <person name="Palmer M.S."/>
            <person name="Berta P."/>
            <person name="Sinclair A.H."/>
            <person name="Pym B."/>
            <person name="Goodfellow P.N."/>
        </authorList>
    </citation>
    <scope>NUCLEOTIDE SEQUENCE [MRNA] (ISOFORM 1)</scope>
</reference>
<reference key="3">
    <citation type="journal article" date="2005" name="Nature">
        <title>The DNA sequence of the human X chromosome.</title>
        <authorList>
            <person name="Ross M.T."/>
            <person name="Grafham D.V."/>
            <person name="Coffey A.J."/>
            <person name="Scherer S."/>
            <person name="McLay K."/>
            <person name="Muzny D."/>
            <person name="Platzer M."/>
            <person name="Howell G.R."/>
            <person name="Burrows C."/>
            <person name="Bird C.P."/>
            <person name="Frankish A."/>
            <person name="Lovell F.L."/>
            <person name="Howe K.L."/>
            <person name="Ashurst J.L."/>
            <person name="Fulton R.S."/>
            <person name="Sudbrak R."/>
            <person name="Wen G."/>
            <person name="Jones M.C."/>
            <person name="Hurles M.E."/>
            <person name="Andrews T.D."/>
            <person name="Scott C.E."/>
            <person name="Searle S."/>
            <person name="Ramser J."/>
            <person name="Whittaker A."/>
            <person name="Deadman R."/>
            <person name="Carter N.P."/>
            <person name="Hunt S.E."/>
            <person name="Chen R."/>
            <person name="Cree A."/>
            <person name="Gunaratne P."/>
            <person name="Havlak P."/>
            <person name="Hodgson A."/>
            <person name="Metzker M.L."/>
            <person name="Richards S."/>
            <person name="Scott G."/>
            <person name="Steffen D."/>
            <person name="Sodergren E."/>
            <person name="Wheeler D.A."/>
            <person name="Worley K.C."/>
            <person name="Ainscough R."/>
            <person name="Ambrose K.D."/>
            <person name="Ansari-Lari M.A."/>
            <person name="Aradhya S."/>
            <person name="Ashwell R.I."/>
            <person name="Babbage A.K."/>
            <person name="Bagguley C.L."/>
            <person name="Ballabio A."/>
            <person name="Banerjee R."/>
            <person name="Barker G.E."/>
            <person name="Barlow K.F."/>
            <person name="Barrett I.P."/>
            <person name="Bates K.N."/>
            <person name="Beare D.M."/>
            <person name="Beasley H."/>
            <person name="Beasley O."/>
            <person name="Beck A."/>
            <person name="Bethel G."/>
            <person name="Blechschmidt K."/>
            <person name="Brady N."/>
            <person name="Bray-Allen S."/>
            <person name="Bridgeman A.M."/>
            <person name="Brown A.J."/>
            <person name="Brown M.J."/>
            <person name="Bonnin D."/>
            <person name="Bruford E.A."/>
            <person name="Buhay C."/>
            <person name="Burch P."/>
            <person name="Burford D."/>
            <person name="Burgess J."/>
            <person name="Burrill W."/>
            <person name="Burton J."/>
            <person name="Bye J.M."/>
            <person name="Carder C."/>
            <person name="Carrel L."/>
            <person name="Chako J."/>
            <person name="Chapman J.C."/>
            <person name="Chavez D."/>
            <person name="Chen E."/>
            <person name="Chen G."/>
            <person name="Chen Y."/>
            <person name="Chen Z."/>
            <person name="Chinault C."/>
            <person name="Ciccodicola A."/>
            <person name="Clark S.Y."/>
            <person name="Clarke G."/>
            <person name="Clee C.M."/>
            <person name="Clegg S."/>
            <person name="Clerc-Blankenburg K."/>
            <person name="Clifford K."/>
            <person name="Cobley V."/>
            <person name="Cole C.G."/>
            <person name="Conquer J.S."/>
            <person name="Corby N."/>
            <person name="Connor R.E."/>
            <person name="David R."/>
            <person name="Davies J."/>
            <person name="Davis C."/>
            <person name="Davis J."/>
            <person name="Delgado O."/>
            <person name="Deshazo D."/>
            <person name="Dhami P."/>
            <person name="Ding Y."/>
            <person name="Dinh H."/>
            <person name="Dodsworth S."/>
            <person name="Draper H."/>
            <person name="Dugan-Rocha S."/>
            <person name="Dunham A."/>
            <person name="Dunn M."/>
            <person name="Durbin K.J."/>
            <person name="Dutta I."/>
            <person name="Eades T."/>
            <person name="Ellwood M."/>
            <person name="Emery-Cohen A."/>
            <person name="Errington H."/>
            <person name="Evans K.L."/>
            <person name="Faulkner L."/>
            <person name="Francis F."/>
            <person name="Frankland J."/>
            <person name="Fraser A.E."/>
            <person name="Galgoczy P."/>
            <person name="Gilbert J."/>
            <person name="Gill R."/>
            <person name="Gloeckner G."/>
            <person name="Gregory S.G."/>
            <person name="Gribble S."/>
            <person name="Griffiths C."/>
            <person name="Grocock R."/>
            <person name="Gu Y."/>
            <person name="Gwilliam R."/>
            <person name="Hamilton C."/>
            <person name="Hart E.A."/>
            <person name="Hawes A."/>
            <person name="Heath P.D."/>
            <person name="Heitmann K."/>
            <person name="Hennig S."/>
            <person name="Hernandez J."/>
            <person name="Hinzmann B."/>
            <person name="Ho S."/>
            <person name="Hoffs M."/>
            <person name="Howden P.J."/>
            <person name="Huckle E.J."/>
            <person name="Hume J."/>
            <person name="Hunt P.J."/>
            <person name="Hunt A.R."/>
            <person name="Isherwood J."/>
            <person name="Jacob L."/>
            <person name="Johnson D."/>
            <person name="Jones S."/>
            <person name="de Jong P.J."/>
            <person name="Joseph S.S."/>
            <person name="Keenan S."/>
            <person name="Kelly S."/>
            <person name="Kershaw J.K."/>
            <person name="Khan Z."/>
            <person name="Kioschis P."/>
            <person name="Klages S."/>
            <person name="Knights A.J."/>
            <person name="Kosiura A."/>
            <person name="Kovar-Smith C."/>
            <person name="Laird G.K."/>
            <person name="Langford C."/>
            <person name="Lawlor S."/>
            <person name="Leversha M."/>
            <person name="Lewis L."/>
            <person name="Liu W."/>
            <person name="Lloyd C."/>
            <person name="Lloyd D.M."/>
            <person name="Loulseged H."/>
            <person name="Loveland J.E."/>
            <person name="Lovell J.D."/>
            <person name="Lozado R."/>
            <person name="Lu J."/>
            <person name="Lyne R."/>
            <person name="Ma J."/>
            <person name="Maheshwari M."/>
            <person name="Matthews L.H."/>
            <person name="McDowall J."/>
            <person name="McLaren S."/>
            <person name="McMurray A."/>
            <person name="Meidl P."/>
            <person name="Meitinger T."/>
            <person name="Milne S."/>
            <person name="Miner G."/>
            <person name="Mistry S.L."/>
            <person name="Morgan M."/>
            <person name="Morris S."/>
            <person name="Mueller I."/>
            <person name="Mullikin J.C."/>
            <person name="Nguyen N."/>
            <person name="Nordsiek G."/>
            <person name="Nyakatura G."/>
            <person name="O'dell C.N."/>
            <person name="Okwuonu G."/>
            <person name="Palmer S."/>
            <person name="Pandian R."/>
            <person name="Parker D."/>
            <person name="Parrish J."/>
            <person name="Pasternak S."/>
            <person name="Patel D."/>
            <person name="Pearce A.V."/>
            <person name="Pearson D.M."/>
            <person name="Pelan S.E."/>
            <person name="Perez L."/>
            <person name="Porter K.M."/>
            <person name="Ramsey Y."/>
            <person name="Reichwald K."/>
            <person name="Rhodes S."/>
            <person name="Ridler K.A."/>
            <person name="Schlessinger D."/>
            <person name="Schueler M.G."/>
            <person name="Sehra H.K."/>
            <person name="Shaw-Smith C."/>
            <person name="Shen H."/>
            <person name="Sheridan E.M."/>
            <person name="Shownkeen R."/>
            <person name="Skuce C.D."/>
            <person name="Smith M.L."/>
            <person name="Sotheran E.C."/>
            <person name="Steingruber H.E."/>
            <person name="Steward C.A."/>
            <person name="Storey R."/>
            <person name="Swann R.M."/>
            <person name="Swarbreck D."/>
            <person name="Tabor P.E."/>
            <person name="Taudien S."/>
            <person name="Taylor T."/>
            <person name="Teague B."/>
            <person name="Thomas K."/>
            <person name="Thorpe A."/>
            <person name="Timms K."/>
            <person name="Tracey A."/>
            <person name="Trevanion S."/>
            <person name="Tromans A.C."/>
            <person name="d'Urso M."/>
            <person name="Verduzco D."/>
            <person name="Villasana D."/>
            <person name="Waldron L."/>
            <person name="Wall M."/>
            <person name="Wang Q."/>
            <person name="Warren J."/>
            <person name="Warry G.L."/>
            <person name="Wei X."/>
            <person name="West A."/>
            <person name="Whitehead S.L."/>
            <person name="Whiteley M.N."/>
            <person name="Wilkinson J.E."/>
            <person name="Willey D.L."/>
            <person name="Williams G."/>
            <person name="Williams L."/>
            <person name="Williamson A."/>
            <person name="Williamson H."/>
            <person name="Wilming L."/>
            <person name="Woodmansey R.L."/>
            <person name="Wray P.W."/>
            <person name="Yen J."/>
            <person name="Zhang J."/>
            <person name="Zhou J."/>
            <person name="Zoghbi H."/>
            <person name="Zorilla S."/>
            <person name="Buck D."/>
            <person name="Reinhardt R."/>
            <person name="Poustka A."/>
            <person name="Rosenthal A."/>
            <person name="Lehrach H."/>
            <person name="Meindl A."/>
            <person name="Minx P.J."/>
            <person name="Hillier L.W."/>
            <person name="Willard H.F."/>
            <person name="Wilson R.K."/>
            <person name="Waterston R.H."/>
            <person name="Rice C.M."/>
            <person name="Vaudin M."/>
            <person name="Coulson A."/>
            <person name="Nelson D.L."/>
            <person name="Weinstock G."/>
            <person name="Sulston J.E."/>
            <person name="Durbin R.M."/>
            <person name="Hubbard T."/>
            <person name="Gibbs R.A."/>
            <person name="Beck S."/>
            <person name="Rogers J."/>
            <person name="Bentley D.R."/>
        </authorList>
    </citation>
    <scope>NUCLEOTIDE SEQUENCE [LARGE SCALE GENOMIC DNA]</scope>
</reference>
<reference key="4">
    <citation type="journal article" date="2004" name="Genome Res.">
        <title>The status, quality, and expansion of the NIH full-length cDNA project: the Mammalian Gene Collection (MGC).</title>
        <authorList>
            <consortium name="The MGC Project Team"/>
        </authorList>
    </citation>
    <scope>NUCLEOTIDE SEQUENCE [LARGE SCALE MRNA] (ISOFORM 3)</scope>
    <source>
        <tissue>Testis</tissue>
    </source>
</reference>
<reference key="5">
    <citation type="submission" date="1998-02" db="EMBL/GenBank/DDBJ databases">
        <title>Exon-intron structure of the X and Y-linked zinc finger protein in mammals.</title>
        <authorList>
            <person name="Poloumienko A."/>
            <person name="Blecher S.R."/>
        </authorList>
    </citation>
    <scope>NUCLEOTIDE SEQUENCE [GENOMIC DNA] OF 1-411</scope>
</reference>
<reference key="6">
    <citation type="journal article" date="1989" name="Cell">
        <title>ZFX has a gene structure similar to ZFY, the putative human sex determinant, and escapes X inactivation.</title>
        <authorList>
            <person name="Schneider-Gaedicke A."/>
            <person name="Beer-Romero P."/>
            <person name="Brown L.G."/>
            <person name="Nussbaum R."/>
            <person name="Page D.C."/>
        </authorList>
    </citation>
    <scope>NUCLEOTIDE SEQUENCE [GENOMIC DNA] OF 413-805</scope>
</reference>
<reference key="7">
    <citation type="journal article" date="1991" name="Nucleic Acids Res.">
        <title>Comparison of ZFY and ZFX gene structure and analysis of alternative 3' untranslated regions of ZFY.</title>
        <authorList>
            <person name="North M."/>
            <person name="Sargent C."/>
            <person name="O'Brien J."/>
            <person name="Taylor K."/>
            <person name="Wolfe J."/>
            <person name="Affara N.A."/>
            <person name="Ferguson-Smith M.A."/>
        </authorList>
    </citation>
    <scope>NUCLEOTIDE SEQUENCE [GENOMIC DNA] OF 427-805</scope>
</reference>
<reference key="8">
    <citation type="journal article" date="2024" name="Am. J. Hum. Genet.">
        <title>Variants in ZFX are associated with an X-linked neurodevelopmental disorder with recurrent facial gestalt.</title>
        <authorList>
            <consortium name="Genomics England Research Consortium"/>
            <person name="Shepherdson J.L."/>
            <person name="Hutchison K."/>
            <person name="Don D.W."/>
            <person name="McGillivray G."/>
            <person name="Choi T.I."/>
            <person name="Allan C.A."/>
            <person name="Amor D.J."/>
            <person name="Banka S."/>
            <person name="Basel D.G."/>
            <person name="Buch L.D."/>
            <person name="Carere D.A."/>
            <person name="Carroll R."/>
            <person name="Clayton-Smith J."/>
            <person name="Crawford A."/>
            <person name="Dunoe M."/>
            <person name="Faivre L."/>
            <person name="Gilfillan C.P."/>
            <person name="Gold N.B."/>
            <person name="Gripp K.W."/>
            <person name="Hobson E."/>
            <person name="Holtz A.M."/>
            <person name="Innes A.M."/>
            <person name="Isidor B."/>
            <person name="Jackson A."/>
            <person name="Katsonis P."/>
            <person name="Amel Riazat Kesh L."/>
            <person name="Kuery S."/>
            <person name="Lecoquierre F."/>
            <person name="Lockhart P."/>
            <person name="Maraval J."/>
            <person name="Matsumoto N."/>
            <person name="McCarrier J."/>
            <person name="McCarthy J."/>
            <person name="Miyake N."/>
            <person name="Moey L.H."/>
            <person name="Nemeth A.H."/>
            <person name="Oestergaard E."/>
            <person name="Patel R."/>
            <person name="Pope K."/>
            <person name="Posey J.E."/>
            <person name="Schnur R.E."/>
            <person name="Shaw M."/>
            <person name="Stolerman E."/>
            <person name="Taylor J.P."/>
            <person name="Wadman E."/>
            <person name="Wakeling E."/>
            <person name="White S.M."/>
            <person name="Wong L.C."/>
            <person name="Lupski J.R."/>
            <person name="Lichtarge O."/>
            <person name="Corbett M.A."/>
            <person name="Gecz J."/>
            <person name="Nicolet C.M."/>
            <person name="Farnham P.J."/>
            <person name="Kim C.H."/>
            <person name="Shinawi M."/>
        </authorList>
    </citation>
    <scope>INVOLVEMENT IN MRXS37</scope>
    <scope>VARIANTS MRXS37 TRP-764; MET-771; CYS-774 AND GLN-786</scope>
    <scope>CHARACTERIZATION OF VARIANTS MRXS37 TRP-764; MET-771; CYS-774 AND GLN-786</scope>
    <scope>FUNCTION</scope>
</reference>
<accession>P17010</accession>
<accession>B9EG97</accession>
<accession>O43668</accession>
<accession>Q8WYJ8</accession>
<sequence>MDEDGLELQQEPNSFFDATGADGTHMDGDQIVVEVQETVFVSDVVDSDITVHNFVPDDPDSVVIQDVIEDVVIEDVQCPDIMEEADVSETVIIPEQVLDSDVTEEVSLAHCTVPDDVLASDITSASMSMPEHVLTGDSIHVSDVGHVGHVGHVEHVVHDSVVEAEIVTDPLTTDVVSEEVLVADCASEAVIDANGIPVDQQDDDKGNCEDYLMISLDDAGKIEHDGSSGMTMDTESEIDPCKVDGTCPEVIKVYIFKADPGEDDLGGTVDIVESEPENDHGVELLDQNSSIRVPREKMVYMTVNDSQPEDEDLNVAEIADEVYMEVIVGEEDAAAAAAAAAVHEQQMDDNEIKTFMPIAWAAAYGNNSDGIENRNGTASALLHIDESAGLGRLAKQKPKKRRRPDSRQYQTAIIIGPDGHPLTVYPCMICGKKFKSRGFLKRHMKNHPEHLAKKKYRCTDCDYTTNKKISLHNHLESHKLTSKAEKAIECDECGKHFSHAGALFTHKMVHKEKGANKMHKCKFCEYETAEQGLLNRHLLAVHSKNFPHICVECGKGFRHPSELKKHMRIHTGEKPYQCQYCEYRSADSSNLKTHVKTKHSKEMPFKCDICLLTFSDTKEVQQHALIHQESKTHQCLHCDHKSSNSSDLKRHIISVHTKDYPHKCDMCDKGFHRPSELKKHVAAHKGKKMHQCRHCDFKIADPFVLSRHILSVHTKDLPFRCKRCRKGFRQQSELKKHMKTHSGRKVYQCEYCEYSTTDASGFKRHVISIHTKDYPHRCEYCKKGFRRPSEKNQHIMRHHKEVGLP</sequence>
<evidence type="ECO:0000250" key="1">
    <source>
        <dbReference type="UniProtKB" id="P17012"/>
    </source>
</evidence>
<evidence type="ECO:0000255" key="2">
    <source>
        <dbReference type="PROSITE-ProRule" id="PRU00042"/>
    </source>
</evidence>
<evidence type="ECO:0000269" key="3">
    <source>
    </source>
</evidence>
<evidence type="ECO:0000269" key="4">
    <source>
    </source>
</evidence>
<evidence type="ECO:0000303" key="5">
    <source>
    </source>
</evidence>
<evidence type="ECO:0000303" key="6">
    <source>
    </source>
</evidence>
<evidence type="ECO:0000305" key="7"/>
<proteinExistence type="evidence at protein level"/>
<comment type="function">
    <text evidence="3 4">Probable transcriptional activator.</text>
</comment>
<comment type="subcellular location">
    <subcellularLocation>
        <location>Nucleus</location>
    </subcellularLocation>
</comment>
<comment type="alternative products">
    <event type="alternative splicing"/>
    <isoform>
        <id>P17010-1</id>
        <name>1</name>
        <sequence type="displayed"/>
    </isoform>
    <isoform>
        <id>P17010-2</id>
        <name>2</name>
        <sequence type="described" ref="VSP_014371"/>
    </isoform>
    <isoform>
        <id>P17010-3</id>
        <name>3</name>
        <sequence type="described" ref="VSP_054512"/>
    </isoform>
</comment>
<comment type="disease" evidence="4">
    <disease id="DI-06875">
        <name>Intellectual developmental disorder, X-linked, syndromic 37</name>
        <acronym>MRXS37</acronym>
        <description>A syndromic neurodevelopmental disorder characterized by developmental delay, intellectual disability, behavioral abnormalities, hypotonia, congenital anomalies, and facial dysmorphism.</description>
        <dbReference type="MIM" id="301118"/>
    </disease>
    <text>The disease is caused by variants affecting the gene represented in this entry.</text>
</comment>
<comment type="similarity">
    <text evidence="7">Belongs to the krueppel C2H2-type zinc-finger protein family. ZFX/ZFY subfamily.</text>
</comment>
<name>ZFX_HUMAN</name>
<dbReference type="EMBL" id="X59738">
    <property type="protein sequence ID" value="CAA42416.1"/>
    <property type="molecule type" value="mRNA"/>
</dbReference>
<dbReference type="EMBL" id="X59739">
    <property type="protein sequence ID" value="CAA42417.1"/>
    <property type="molecule type" value="mRNA"/>
</dbReference>
<dbReference type="EMBL" id="X59740">
    <property type="protein sequence ID" value="CAA42418.1"/>
    <property type="molecule type" value="mRNA"/>
</dbReference>
<dbReference type="EMBL" id="M30608">
    <property type="protein sequence ID" value="AAA61309.1"/>
    <property type="molecule type" value="mRNA"/>
</dbReference>
<dbReference type="EMBL" id="AC002404">
    <property type="status" value="NOT_ANNOTATED_CDS"/>
    <property type="molecule type" value="Genomic_DNA"/>
</dbReference>
<dbReference type="EMBL" id="BC136309">
    <property type="protein sequence ID" value="AAI36310.1"/>
    <property type="molecule type" value="mRNA"/>
</dbReference>
<dbReference type="EMBL" id="AH005875">
    <property type="protein sequence ID" value="AAL62492.1"/>
    <property type="molecule type" value="Genomic_DNA"/>
</dbReference>
<dbReference type="EMBL" id="AF045781">
    <property type="protein sequence ID" value="AAC03062.2"/>
    <property type="molecule type" value="Genomic_DNA"/>
</dbReference>
<dbReference type="EMBL" id="M26946">
    <property type="status" value="NOT_ANNOTATED_CDS"/>
    <property type="molecule type" value="Genomic_DNA"/>
</dbReference>
<dbReference type="CCDS" id="CCDS14211.1">
    <molecule id="P17010-1"/>
</dbReference>
<dbReference type="CCDS" id="CCDS55390.1">
    <molecule id="P17010-2"/>
</dbReference>
<dbReference type="CCDS" id="CCDS83461.1">
    <molecule id="P17010-3"/>
</dbReference>
<dbReference type="PIR" id="B35047">
    <property type="entry name" value="B35047"/>
</dbReference>
<dbReference type="RefSeq" id="NP_001171555.1">
    <molecule id="P17010-1"/>
    <property type="nucleotide sequence ID" value="NM_001178084.2"/>
</dbReference>
<dbReference type="RefSeq" id="NP_001171556.1">
    <molecule id="P17010-1"/>
    <property type="nucleotide sequence ID" value="NM_001178085.1"/>
</dbReference>
<dbReference type="RefSeq" id="NP_001171557.1">
    <molecule id="P17010-2"/>
    <property type="nucleotide sequence ID" value="NM_001178086.2"/>
</dbReference>
<dbReference type="RefSeq" id="NP_001317256.1">
    <molecule id="P17010-3"/>
    <property type="nucleotide sequence ID" value="NM_001330327.2"/>
</dbReference>
<dbReference type="RefSeq" id="NP_003401.2">
    <molecule id="P17010-1"/>
    <property type="nucleotide sequence ID" value="NM_003410.4"/>
</dbReference>
<dbReference type="RefSeq" id="XP_005274648.1">
    <molecule id="P17010-1"/>
    <property type="nucleotide sequence ID" value="XM_005274591.5"/>
</dbReference>
<dbReference type="RefSeq" id="XP_005274649.1">
    <molecule id="P17010-1"/>
    <property type="nucleotide sequence ID" value="XM_005274592.4"/>
</dbReference>
<dbReference type="RefSeq" id="XP_006724576.1">
    <molecule id="P17010-3"/>
    <property type="nucleotide sequence ID" value="XM_006724513.4"/>
</dbReference>
<dbReference type="RefSeq" id="XP_011543881.1">
    <molecule id="P17010-1"/>
    <property type="nucleotide sequence ID" value="XM_011545579.2"/>
</dbReference>
<dbReference type="RefSeq" id="XP_011543883.1">
    <molecule id="P17010-1"/>
    <property type="nucleotide sequence ID" value="XM_011545581.3"/>
</dbReference>
<dbReference type="RefSeq" id="XP_016885277.1">
    <molecule id="P17010-3"/>
    <property type="nucleotide sequence ID" value="XM_017029788.2"/>
</dbReference>
<dbReference type="RefSeq" id="XP_016885278.1">
    <molecule id="P17010-3"/>
    <property type="nucleotide sequence ID" value="XM_017029789.2"/>
</dbReference>
<dbReference type="RefSeq" id="XP_016885279.1">
    <molecule id="P17010-3"/>
    <property type="nucleotide sequence ID" value="XM_017029790.2"/>
</dbReference>
<dbReference type="RefSeq" id="XP_016885280.1">
    <molecule id="P17010-3"/>
    <property type="nucleotide sequence ID" value="XM_017029791.3"/>
</dbReference>
<dbReference type="RefSeq" id="XP_016885281.1">
    <molecule id="P17010-3"/>
    <property type="nucleotide sequence ID" value="XM_017029792.2"/>
</dbReference>
<dbReference type="RefSeq" id="XP_016885282.1">
    <molecule id="P17010-3"/>
    <property type="nucleotide sequence ID" value="XM_017029793.2"/>
</dbReference>
<dbReference type="RefSeq" id="XP_016885283.1">
    <molecule id="P17010-1"/>
    <property type="nucleotide sequence ID" value="XM_017029794.2"/>
</dbReference>
<dbReference type="RefSeq" id="XP_016885284.1">
    <molecule id="P17010-1"/>
    <property type="nucleotide sequence ID" value="XM_017029795.2"/>
</dbReference>
<dbReference type="RefSeq" id="XP_047298391.1">
    <molecule id="P17010-3"/>
    <property type="nucleotide sequence ID" value="XM_047442435.1"/>
</dbReference>
<dbReference type="RefSeq" id="XP_047298392.1">
    <molecule id="P17010-3"/>
    <property type="nucleotide sequence ID" value="XM_047442436.1"/>
</dbReference>
<dbReference type="RefSeq" id="XP_047298393.1">
    <molecule id="P17010-3"/>
    <property type="nucleotide sequence ID" value="XM_047442437.1"/>
</dbReference>
<dbReference type="RefSeq" id="XP_047298394.1">
    <molecule id="P17010-3"/>
    <property type="nucleotide sequence ID" value="XM_047442438.1"/>
</dbReference>
<dbReference type="RefSeq" id="XP_047298395.1">
    <molecule id="P17010-3"/>
    <property type="nucleotide sequence ID" value="XM_047442439.1"/>
</dbReference>
<dbReference type="RefSeq" id="XP_047298396.1">
    <molecule id="P17010-3"/>
    <property type="nucleotide sequence ID" value="XM_047442440.1"/>
</dbReference>
<dbReference type="RefSeq" id="XP_047298397.1">
    <molecule id="P17010-3"/>
    <property type="nucleotide sequence ID" value="XM_047442441.1"/>
</dbReference>
<dbReference type="RefSeq" id="XP_047298398.1">
    <molecule id="P17010-3"/>
    <property type="nucleotide sequence ID" value="XM_047442442.1"/>
</dbReference>
<dbReference type="RefSeq" id="XP_047298399.1">
    <molecule id="P17010-3"/>
    <property type="nucleotide sequence ID" value="XM_047442443.1"/>
</dbReference>
<dbReference type="RefSeq" id="XP_047298400.1">
    <molecule id="P17010-3"/>
    <property type="nucleotide sequence ID" value="XM_047442444.1"/>
</dbReference>
<dbReference type="RefSeq" id="XP_047298401.1">
    <molecule id="P17010-1"/>
    <property type="nucleotide sequence ID" value="XM_047442445.1"/>
</dbReference>
<dbReference type="RefSeq" id="XP_047298402.1">
    <molecule id="P17010-1"/>
    <property type="nucleotide sequence ID" value="XM_047442446.1"/>
</dbReference>
<dbReference type="RefSeq" id="XP_047298403.1">
    <molecule id="P17010-1"/>
    <property type="nucleotide sequence ID" value="XM_047442447.1"/>
</dbReference>
<dbReference type="RefSeq" id="XP_047298404.1">
    <molecule id="P17010-1"/>
    <property type="nucleotide sequence ID" value="XM_047442448.1"/>
</dbReference>
<dbReference type="RefSeq" id="XP_047298405.1">
    <molecule id="P17010-1"/>
    <property type="nucleotide sequence ID" value="XM_047442449.1"/>
</dbReference>
<dbReference type="RefSeq" id="XP_047298406.1">
    <molecule id="P17010-1"/>
    <property type="nucleotide sequence ID" value="XM_047442450.1"/>
</dbReference>
<dbReference type="RefSeq" id="XP_047298407.1">
    <molecule id="P17010-1"/>
    <property type="nucleotide sequence ID" value="XM_047442451.1"/>
</dbReference>
<dbReference type="RefSeq" id="XP_047298408.1">
    <molecule id="P17010-1"/>
    <property type="nucleotide sequence ID" value="XM_047442452.1"/>
</dbReference>
<dbReference type="RefSeq" id="XP_047298409.1">
    <molecule id="P17010-1"/>
    <property type="nucleotide sequence ID" value="XM_047442453.1"/>
</dbReference>
<dbReference type="RefSeq" id="XP_047298410.1">
    <molecule id="P17010-1"/>
    <property type="nucleotide sequence ID" value="XM_047442454.1"/>
</dbReference>
<dbReference type="RefSeq" id="XP_047298411.1">
    <molecule id="P17010-1"/>
    <property type="nucleotide sequence ID" value="XM_047442455.1"/>
</dbReference>
<dbReference type="RefSeq" id="XP_047298412.1">
    <molecule id="P17010-1"/>
    <property type="nucleotide sequence ID" value="XM_047442456.1"/>
</dbReference>
<dbReference type="RefSeq" id="XP_047298413.1">
    <molecule id="P17010-1"/>
    <property type="nucleotide sequence ID" value="XM_047442457.1"/>
</dbReference>
<dbReference type="RefSeq" id="XP_054183692.1">
    <molecule id="P17010-3"/>
    <property type="nucleotide sequence ID" value="XM_054327717.1"/>
</dbReference>
<dbReference type="RefSeq" id="XP_054183693.1">
    <molecule id="P17010-3"/>
    <property type="nucleotide sequence ID" value="XM_054327718.1"/>
</dbReference>
<dbReference type="RefSeq" id="XP_054183694.1">
    <molecule id="P17010-3"/>
    <property type="nucleotide sequence ID" value="XM_054327719.1"/>
</dbReference>
<dbReference type="RefSeq" id="XP_054183695.1">
    <molecule id="P17010-3"/>
    <property type="nucleotide sequence ID" value="XM_054327720.1"/>
</dbReference>
<dbReference type="RefSeq" id="XP_054183696.1">
    <molecule id="P17010-3"/>
    <property type="nucleotide sequence ID" value="XM_054327721.1"/>
</dbReference>
<dbReference type="RefSeq" id="XP_054183697.1">
    <molecule id="P17010-3"/>
    <property type="nucleotide sequence ID" value="XM_054327722.1"/>
</dbReference>
<dbReference type="RefSeq" id="XP_054183698.1">
    <molecule id="P17010-3"/>
    <property type="nucleotide sequence ID" value="XM_054327723.1"/>
</dbReference>
<dbReference type="RefSeq" id="XP_054183699.1">
    <molecule id="P17010-3"/>
    <property type="nucleotide sequence ID" value="XM_054327724.1"/>
</dbReference>
<dbReference type="RefSeq" id="XP_054183700.1">
    <molecule id="P17010-3"/>
    <property type="nucleotide sequence ID" value="XM_054327725.1"/>
</dbReference>
<dbReference type="RefSeq" id="XP_054183701.1">
    <molecule id="P17010-3"/>
    <property type="nucleotide sequence ID" value="XM_054327726.1"/>
</dbReference>
<dbReference type="RefSeq" id="XP_054183702.1">
    <molecule id="P17010-3"/>
    <property type="nucleotide sequence ID" value="XM_054327727.1"/>
</dbReference>
<dbReference type="RefSeq" id="XP_054183703.1">
    <molecule id="P17010-3"/>
    <property type="nucleotide sequence ID" value="XM_054327728.1"/>
</dbReference>
<dbReference type="RefSeq" id="XP_054183704.1">
    <molecule id="P17010-3"/>
    <property type="nucleotide sequence ID" value="XM_054327729.1"/>
</dbReference>
<dbReference type="RefSeq" id="XP_054183705.1">
    <molecule id="P17010-3"/>
    <property type="nucleotide sequence ID" value="XM_054327730.1"/>
</dbReference>
<dbReference type="RefSeq" id="XP_054183707.1">
    <molecule id="P17010-1"/>
    <property type="nucleotide sequence ID" value="XM_054327732.1"/>
</dbReference>
<dbReference type="RefSeq" id="XP_054183708.1">
    <molecule id="P17010-1"/>
    <property type="nucleotide sequence ID" value="XM_054327733.1"/>
</dbReference>
<dbReference type="RefSeq" id="XP_054183709.1">
    <molecule id="P17010-1"/>
    <property type="nucleotide sequence ID" value="XM_054327734.1"/>
</dbReference>
<dbReference type="RefSeq" id="XP_054183710.1">
    <molecule id="P17010-1"/>
    <property type="nucleotide sequence ID" value="XM_054327735.1"/>
</dbReference>
<dbReference type="RefSeq" id="XP_054183711.1">
    <molecule id="P17010-1"/>
    <property type="nucleotide sequence ID" value="XM_054327736.1"/>
</dbReference>
<dbReference type="RefSeq" id="XP_054183712.1">
    <molecule id="P17010-1"/>
    <property type="nucleotide sequence ID" value="XM_054327737.1"/>
</dbReference>
<dbReference type="RefSeq" id="XP_054183713.1">
    <molecule id="P17010-1"/>
    <property type="nucleotide sequence ID" value="XM_054327738.1"/>
</dbReference>
<dbReference type="RefSeq" id="XP_054183714.1">
    <molecule id="P17010-1"/>
    <property type="nucleotide sequence ID" value="XM_054327739.1"/>
</dbReference>
<dbReference type="RefSeq" id="XP_054183715.1">
    <molecule id="P17010-1"/>
    <property type="nucleotide sequence ID" value="XM_054327740.1"/>
</dbReference>
<dbReference type="RefSeq" id="XP_054183716.1">
    <molecule id="P17010-1"/>
    <property type="nucleotide sequence ID" value="XM_054327741.1"/>
</dbReference>
<dbReference type="RefSeq" id="XP_054183717.1">
    <molecule id="P17010-1"/>
    <property type="nucleotide sequence ID" value="XM_054327742.1"/>
</dbReference>
<dbReference type="RefSeq" id="XP_054183718.1">
    <molecule id="P17010-1"/>
    <property type="nucleotide sequence ID" value="XM_054327743.1"/>
</dbReference>
<dbReference type="RefSeq" id="XP_054183719.1">
    <molecule id="P17010-1"/>
    <property type="nucleotide sequence ID" value="XM_054327744.1"/>
</dbReference>
<dbReference type="RefSeq" id="XP_054183720.1">
    <molecule id="P17010-1"/>
    <property type="nucleotide sequence ID" value="XM_054327745.1"/>
</dbReference>
<dbReference type="RefSeq" id="XP_054183721.1">
    <molecule id="P17010-1"/>
    <property type="nucleotide sequence ID" value="XM_054327746.1"/>
</dbReference>
<dbReference type="RefSeq" id="XP_054183722.1">
    <molecule id="P17010-1"/>
    <property type="nucleotide sequence ID" value="XM_054327747.1"/>
</dbReference>
<dbReference type="RefSeq" id="XP_054183723.1">
    <molecule id="P17010-1"/>
    <property type="nucleotide sequence ID" value="XM_054327748.1"/>
</dbReference>
<dbReference type="RefSeq" id="XP_054183724.1">
    <molecule id="P17010-1"/>
    <property type="nucleotide sequence ID" value="XM_054327749.1"/>
</dbReference>
<dbReference type="RefSeq" id="XP_054183725.1">
    <molecule id="P17010-1"/>
    <property type="nucleotide sequence ID" value="XM_054327750.1"/>
</dbReference>
<dbReference type="RefSeq" id="XP_054183726.1">
    <molecule id="P17010-1"/>
    <property type="nucleotide sequence ID" value="XM_054327751.1"/>
</dbReference>
<dbReference type="SMR" id="P17010"/>
<dbReference type="BioGRID" id="113375">
    <property type="interactions" value="21"/>
</dbReference>
<dbReference type="DIP" id="DIP-62116N"/>
<dbReference type="FunCoup" id="P17010">
    <property type="interactions" value="2371"/>
</dbReference>
<dbReference type="IntAct" id="P17010">
    <property type="interactions" value="9"/>
</dbReference>
<dbReference type="STRING" id="9606.ENSP00000368486"/>
<dbReference type="GlyGen" id="P17010">
    <property type="glycosylation" value="2 sites, 1 O-linked glycan (2 sites)"/>
</dbReference>
<dbReference type="iPTMnet" id="P17010"/>
<dbReference type="PhosphoSitePlus" id="P17010"/>
<dbReference type="BioMuta" id="ZFX"/>
<dbReference type="DMDM" id="68844748"/>
<dbReference type="jPOST" id="P17010"/>
<dbReference type="MassIVE" id="P17010"/>
<dbReference type="PaxDb" id="9606-ENSP00000368475"/>
<dbReference type="PeptideAtlas" id="P17010"/>
<dbReference type="ProteomicsDB" id="53407">
    <molecule id="P17010-1"/>
</dbReference>
<dbReference type="ProteomicsDB" id="53408">
    <molecule id="P17010-2"/>
</dbReference>
<dbReference type="ProteomicsDB" id="7522"/>
<dbReference type="Pumba" id="P17010"/>
<dbReference type="Antibodypedia" id="577">
    <property type="antibodies" value="171 antibodies from 29 providers"/>
</dbReference>
<dbReference type="DNASU" id="7543"/>
<dbReference type="Ensembl" id="ENST00000304543.10">
    <molecule id="P17010-1"/>
    <property type="protein sequence ID" value="ENSP00000304985.5"/>
    <property type="gene ID" value="ENSG00000005889.16"/>
</dbReference>
<dbReference type="Ensembl" id="ENST00000379177.5">
    <molecule id="P17010-1"/>
    <property type="protein sequence ID" value="ENSP00000368475.1"/>
    <property type="gene ID" value="ENSG00000005889.16"/>
</dbReference>
<dbReference type="Ensembl" id="ENST00000379188.7">
    <molecule id="P17010-3"/>
    <property type="protein sequence ID" value="ENSP00000368486.4"/>
    <property type="gene ID" value="ENSG00000005889.16"/>
</dbReference>
<dbReference type="Ensembl" id="ENST00000539115.5">
    <molecule id="P17010-2"/>
    <property type="protein sequence ID" value="ENSP00000438233.1"/>
    <property type="gene ID" value="ENSG00000005889.16"/>
</dbReference>
<dbReference type="GeneID" id="7543"/>
<dbReference type="KEGG" id="hsa:7543"/>
<dbReference type="MANE-Select" id="ENST00000304543.10">
    <property type="protein sequence ID" value="ENSP00000304985.5"/>
    <property type="RefSeq nucleotide sequence ID" value="NM_003410.4"/>
    <property type="RefSeq protein sequence ID" value="NP_003401.2"/>
</dbReference>
<dbReference type="UCSC" id="uc004dbd.3">
    <molecule id="P17010-1"/>
    <property type="organism name" value="human"/>
</dbReference>
<dbReference type="AGR" id="HGNC:12869"/>
<dbReference type="CTD" id="7543"/>
<dbReference type="DisGeNET" id="7543"/>
<dbReference type="GeneCards" id="ZFX"/>
<dbReference type="HGNC" id="HGNC:12869">
    <property type="gene designation" value="ZFX"/>
</dbReference>
<dbReference type="HPA" id="ENSG00000005889">
    <property type="expression patterns" value="Low tissue specificity"/>
</dbReference>
<dbReference type="MalaCards" id="ZFX"/>
<dbReference type="MIM" id="301118">
    <property type="type" value="phenotype"/>
</dbReference>
<dbReference type="MIM" id="314980">
    <property type="type" value="gene"/>
</dbReference>
<dbReference type="neXtProt" id="NX_P17010"/>
<dbReference type="OpenTargets" id="ENSG00000005889"/>
<dbReference type="PharmGKB" id="PA37458"/>
<dbReference type="VEuPathDB" id="HostDB:ENSG00000005889"/>
<dbReference type="eggNOG" id="KOG1721">
    <property type="taxonomic scope" value="Eukaryota"/>
</dbReference>
<dbReference type="GeneTree" id="ENSGT00940000158684"/>
<dbReference type="HOGENOM" id="CLU_021097_0_0_1"/>
<dbReference type="InParanoid" id="P17010"/>
<dbReference type="OMA" id="PDIEHME"/>
<dbReference type="OrthoDB" id="3561125at2759"/>
<dbReference type="PAN-GO" id="P17010">
    <property type="GO annotations" value="3 GO annotations based on evolutionary models"/>
</dbReference>
<dbReference type="PhylomeDB" id="P17010"/>
<dbReference type="TreeFam" id="TF335557"/>
<dbReference type="PathwayCommons" id="P17010"/>
<dbReference type="SignaLink" id="P17010"/>
<dbReference type="SIGNOR" id="P17010"/>
<dbReference type="BioGRID-ORCS" id="7543">
    <property type="hits" value="98 hits in 800 CRISPR screens"/>
</dbReference>
<dbReference type="ChiTaRS" id="ZFX">
    <property type="organism name" value="human"/>
</dbReference>
<dbReference type="GeneWiki" id="ZFX"/>
<dbReference type="GenomeRNAi" id="7543"/>
<dbReference type="Pharos" id="P17010">
    <property type="development level" value="Tbio"/>
</dbReference>
<dbReference type="PRO" id="PR:P17010"/>
<dbReference type="Proteomes" id="UP000005640">
    <property type="component" value="Chromosome X"/>
</dbReference>
<dbReference type="RNAct" id="P17010">
    <property type="molecule type" value="protein"/>
</dbReference>
<dbReference type="Bgee" id="ENSG00000005889">
    <property type="expression patterns" value="Expressed in calcaneal tendon and 177 other cell types or tissues"/>
</dbReference>
<dbReference type="ExpressionAtlas" id="P17010">
    <property type="expression patterns" value="baseline and differential"/>
</dbReference>
<dbReference type="GO" id="GO:0000785">
    <property type="term" value="C:chromatin"/>
    <property type="evidence" value="ECO:0000314"/>
    <property type="project" value="ARUK-UCL"/>
</dbReference>
<dbReference type="GO" id="GO:0005694">
    <property type="term" value="C:chromosome"/>
    <property type="evidence" value="ECO:0000318"/>
    <property type="project" value="GO_Central"/>
</dbReference>
<dbReference type="GO" id="GO:0005730">
    <property type="term" value="C:nucleolus"/>
    <property type="evidence" value="ECO:0000314"/>
    <property type="project" value="HPA"/>
</dbReference>
<dbReference type="GO" id="GO:0005654">
    <property type="term" value="C:nucleoplasm"/>
    <property type="evidence" value="ECO:0000314"/>
    <property type="project" value="HPA"/>
</dbReference>
<dbReference type="GO" id="GO:0043035">
    <property type="term" value="F:chromatin insulator sequence binding"/>
    <property type="evidence" value="ECO:0000318"/>
    <property type="project" value="GO_Central"/>
</dbReference>
<dbReference type="GO" id="GO:0001228">
    <property type="term" value="F:DNA-binding transcription activator activity, RNA polymerase II-specific"/>
    <property type="evidence" value="ECO:0000314"/>
    <property type="project" value="ARUK-UCL"/>
</dbReference>
<dbReference type="GO" id="GO:0000978">
    <property type="term" value="F:RNA polymerase II cis-regulatory region sequence-specific DNA binding"/>
    <property type="evidence" value="ECO:0000314"/>
    <property type="project" value="ARUK-UCL"/>
</dbReference>
<dbReference type="GO" id="GO:0008270">
    <property type="term" value="F:zinc ion binding"/>
    <property type="evidence" value="ECO:0007669"/>
    <property type="project" value="UniProtKB-KW"/>
</dbReference>
<dbReference type="GO" id="GO:0045944">
    <property type="term" value="P:positive regulation of transcription by RNA polymerase II"/>
    <property type="evidence" value="ECO:0000314"/>
    <property type="project" value="ARUK-UCL"/>
</dbReference>
<dbReference type="GO" id="GO:0006357">
    <property type="term" value="P:regulation of transcription by RNA polymerase II"/>
    <property type="evidence" value="ECO:0000318"/>
    <property type="project" value="GO_Central"/>
</dbReference>
<dbReference type="FunFam" id="3.30.160.60:FF:000054">
    <property type="entry name" value="Zinc finger protein 711"/>
    <property type="match status" value="1"/>
</dbReference>
<dbReference type="FunFam" id="3.30.160.60:FF:000209">
    <property type="entry name" value="Zinc finger protein 711"/>
    <property type="match status" value="3"/>
</dbReference>
<dbReference type="FunFam" id="3.30.160.60:FF:000170">
    <property type="entry name" value="Zinc finger protein 711 isoform X2"/>
    <property type="match status" value="1"/>
</dbReference>
<dbReference type="FunFam" id="3.30.160.60:FF:000607">
    <property type="entry name" value="zinc finger X-chromosomal protein-like isoform X1"/>
    <property type="match status" value="1"/>
</dbReference>
<dbReference type="FunFam" id="3.30.160.60:FF:000461">
    <property type="entry name" value="Zinc finger X-chromosomal protein-like protein"/>
    <property type="match status" value="1"/>
</dbReference>
<dbReference type="Gene3D" id="3.30.160.60">
    <property type="entry name" value="Classic Zinc Finger"/>
    <property type="match status" value="8"/>
</dbReference>
<dbReference type="InterPro" id="IPR050752">
    <property type="entry name" value="C2H2-ZF_domain"/>
</dbReference>
<dbReference type="InterPro" id="IPR006794">
    <property type="entry name" value="Transcrp_activ_Zfx/Zfy-dom"/>
</dbReference>
<dbReference type="InterPro" id="IPR036236">
    <property type="entry name" value="Znf_C2H2_sf"/>
</dbReference>
<dbReference type="InterPro" id="IPR013087">
    <property type="entry name" value="Znf_C2H2_type"/>
</dbReference>
<dbReference type="PANTHER" id="PTHR24384:SF189">
    <property type="entry name" value="C2H2-TYPE DOMAIN-CONTAINING PROTEIN-RELATED"/>
    <property type="match status" value="1"/>
</dbReference>
<dbReference type="PANTHER" id="PTHR24384">
    <property type="entry name" value="FINGER PUTATIVE TRANSCRIPTION FACTOR FAMILY-RELATED"/>
    <property type="match status" value="1"/>
</dbReference>
<dbReference type="Pfam" id="PF00096">
    <property type="entry name" value="zf-C2H2"/>
    <property type="match status" value="7"/>
</dbReference>
<dbReference type="Pfam" id="PF13909">
    <property type="entry name" value="zf-H2C2_5"/>
    <property type="match status" value="1"/>
</dbReference>
<dbReference type="Pfam" id="PF04704">
    <property type="entry name" value="Zfx_Zfy_act"/>
    <property type="match status" value="1"/>
</dbReference>
<dbReference type="SMART" id="SM00355">
    <property type="entry name" value="ZnF_C2H2"/>
    <property type="match status" value="13"/>
</dbReference>
<dbReference type="SUPFAM" id="SSF57667">
    <property type="entry name" value="beta-beta-alpha zinc fingers"/>
    <property type="match status" value="7"/>
</dbReference>
<dbReference type="PROSITE" id="PS00028">
    <property type="entry name" value="ZINC_FINGER_C2H2_1"/>
    <property type="match status" value="8"/>
</dbReference>
<dbReference type="PROSITE" id="PS50157">
    <property type="entry name" value="ZINC_FINGER_C2H2_2"/>
    <property type="match status" value="13"/>
</dbReference>
<protein>
    <recommendedName>
        <fullName>Zinc finger X-chromosomal protein</fullName>
    </recommendedName>
</protein>
<organism>
    <name type="scientific">Homo sapiens</name>
    <name type="common">Human</name>
    <dbReference type="NCBI Taxonomy" id="9606"/>
    <lineage>
        <taxon>Eukaryota</taxon>
        <taxon>Metazoa</taxon>
        <taxon>Chordata</taxon>
        <taxon>Craniata</taxon>
        <taxon>Vertebrata</taxon>
        <taxon>Euteleostomi</taxon>
        <taxon>Mammalia</taxon>
        <taxon>Eutheria</taxon>
        <taxon>Euarchontoglires</taxon>
        <taxon>Primates</taxon>
        <taxon>Haplorrhini</taxon>
        <taxon>Catarrhini</taxon>
        <taxon>Hominidae</taxon>
        <taxon>Homo</taxon>
    </lineage>
</organism>